<organism>
    <name type="scientific">Xanthomonas campestris pv. campestris (strain 8004)</name>
    <dbReference type="NCBI Taxonomy" id="314565"/>
    <lineage>
        <taxon>Bacteria</taxon>
        <taxon>Pseudomonadati</taxon>
        <taxon>Pseudomonadota</taxon>
        <taxon>Gammaproteobacteria</taxon>
        <taxon>Lysobacterales</taxon>
        <taxon>Lysobacteraceae</taxon>
        <taxon>Xanthomonas</taxon>
    </lineage>
</organism>
<name>THIC_XANC8</name>
<accession>Q4UYF2</accession>
<feature type="chain" id="PRO_0000242318" description="Phosphomethylpyrimidine synthase">
    <location>
        <begin position="1"/>
        <end position="625"/>
    </location>
</feature>
<feature type="binding site" evidence="1">
    <location>
        <position position="230"/>
    </location>
    <ligand>
        <name>substrate</name>
    </ligand>
</feature>
<feature type="binding site" evidence="1">
    <location>
        <position position="259"/>
    </location>
    <ligand>
        <name>substrate</name>
    </ligand>
</feature>
<feature type="binding site" evidence="1">
    <location>
        <position position="288"/>
    </location>
    <ligand>
        <name>substrate</name>
    </ligand>
</feature>
<feature type="binding site" evidence="1">
    <location>
        <position position="324"/>
    </location>
    <ligand>
        <name>substrate</name>
    </ligand>
</feature>
<feature type="binding site" evidence="1">
    <location>
        <begin position="344"/>
        <end position="346"/>
    </location>
    <ligand>
        <name>substrate</name>
    </ligand>
</feature>
<feature type="binding site" evidence="1">
    <location>
        <begin position="385"/>
        <end position="388"/>
    </location>
    <ligand>
        <name>substrate</name>
    </ligand>
</feature>
<feature type="binding site" evidence="1">
    <location>
        <position position="424"/>
    </location>
    <ligand>
        <name>substrate</name>
    </ligand>
</feature>
<feature type="binding site" evidence="1">
    <location>
        <position position="428"/>
    </location>
    <ligand>
        <name>Zn(2+)</name>
        <dbReference type="ChEBI" id="CHEBI:29105"/>
    </ligand>
</feature>
<feature type="binding site" evidence="1">
    <location>
        <position position="451"/>
    </location>
    <ligand>
        <name>substrate</name>
    </ligand>
</feature>
<feature type="binding site" evidence="1">
    <location>
        <position position="492"/>
    </location>
    <ligand>
        <name>Zn(2+)</name>
        <dbReference type="ChEBI" id="CHEBI:29105"/>
    </ligand>
</feature>
<feature type="binding site" evidence="1">
    <location>
        <position position="572"/>
    </location>
    <ligand>
        <name>[4Fe-4S] cluster</name>
        <dbReference type="ChEBI" id="CHEBI:49883"/>
        <note>4Fe-4S-S-AdoMet</note>
    </ligand>
</feature>
<feature type="binding site" evidence="1">
    <location>
        <position position="575"/>
    </location>
    <ligand>
        <name>[4Fe-4S] cluster</name>
        <dbReference type="ChEBI" id="CHEBI:49883"/>
        <note>4Fe-4S-S-AdoMet</note>
    </ligand>
</feature>
<feature type="binding site" evidence="1">
    <location>
        <position position="580"/>
    </location>
    <ligand>
        <name>[4Fe-4S] cluster</name>
        <dbReference type="ChEBI" id="CHEBI:49883"/>
        <note>4Fe-4S-S-AdoMet</note>
    </ligand>
</feature>
<evidence type="ECO:0000255" key="1">
    <source>
        <dbReference type="HAMAP-Rule" id="MF_00089"/>
    </source>
</evidence>
<keyword id="KW-0004">4Fe-4S</keyword>
<keyword id="KW-0408">Iron</keyword>
<keyword id="KW-0411">Iron-sulfur</keyword>
<keyword id="KW-0456">Lyase</keyword>
<keyword id="KW-0479">Metal-binding</keyword>
<keyword id="KW-0949">S-adenosyl-L-methionine</keyword>
<keyword id="KW-0784">Thiamine biosynthesis</keyword>
<keyword id="KW-0862">Zinc</keyword>
<gene>
    <name evidence="1" type="primary">thiC</name>
    <name type="ordered locus">XC_0846</name>
</gene>
<proteinExistence type="inferred from homology"/>
<sequence>MNAAPTVLLQQTQTLSAAVTQPIPGSRKIFVQGSRADLQVPMREIVLTRTPTLFGGQDNPPLSVYDTSGPYTDPQAAIDLAAGLAPLRADWIAERGDTLPLEALSSSFGRGREHDARLDAVRFPSRRLPRVARSGANVTQMHYARRGIITPEMEFVAIRENQRLEAVTDAVLRKQHPGEAFGAAIQQRITPEFVREEIARGRAILPNNINHPESEPMIIGRNFLTKINANIGNSAVSSGIAEEVEKLVWSIRWGGDTVMDLSTGKHIHETRDWIIRNSPVPIGTVPIYQALEKVDGRAEELTWEIFRDTLIEQAEQGVDYFTIHAGVLLRYVPLTARRVTGIVSRGGSILAKWCLAHHKENFLYTHFEDICEIMKAYDVAFSLGDGLRPGCIADANDAAQFGELETLGELTKLAWKHDVQTMIEGPGHVPMQLIKENMDKQLRECGEAPFYTLGPLTTDIAPGYDHITSAIGAAMIGWFGTAMLCYVTPKEHLGLPNRQDVRDGIMAYKIAAHAADLAKGHPGVQVRDNALSKARFEFRWDDQFHLGLDPEKAKEFHDETLPKDAHKLAHFCSMCGPHFCSMKITQDVRDYAAEHGISEDHALEAGMQEKSGEFVAQGAQVYRAS</sequence>
<comment type="function">
    <text evidence="1">Catalyzes the synthesis of the hydroxymethylpyrimidine phosphate (HMP-P) moiety of thiamine from aminoimidazole ribotide (AIR) in a radical S-adenosyl-L-methionine (SAM)-dependent reaction.</text>
</comment>
<comment type="catalytic activity">
    <reaction evidence="1">
        <text>5-amino-1-(5-phospho-beta-D-ribosyl)imidazole + S-adenosyl-L-methionine = 4-amino-2-methyl-5-(phosphooxymethyl)pyrimidine + CO + 5'-deoxyadenosine + formate + L-methionine + 3 H(+)</text>
        <dbReference type="Rhea" id="RHEA:24840"/>
        <dbReference type="ChEBI" id="CHEBI:15378"/>
        <dbReference type="ChEBI" id="CHEBI:15740"/>
        <dbReference type="ChEBI" id="CHEBI:17245"/>
        <dbReference type="ChEBI" id="CHEBI:17319"/>
        <dbReference type="ChEBI" id="CHEBI:57844"/>
        <dbReference type="ChEBI" id="CHEBI:58354"/>
        <dbReference type="ChEBI" id="CHEBI:59789"/>
        <dbReference type="ChEBI" id="CHEBI:137981"/>
        <dbReference type="EC" id="4.1.99.17"/>
    </reaction>
</comment>
<comment type="cofactor">
    <cofactor evidence="1">
        <name>[4Fe-4S] cluster</name>
        <dbReference type="ChEBI" id="CHEBI:49883"/>
    </cofactor>
    <text evidence="1">Binds 1 [4Fe-4S] cluster per subunit. The cluster is coordinated with 3 cysteines and an exchangeable S-adenosyl-L-methionine.</text>
</comment>
<comment type="pathway">
    <text evidence="1">Cofactor biosynthesis; thiamine diphosphate biosynthesis.</text>
</comment>
<comment type="subunit">
    <text evidence="1">Homodimer.</text>
</comment>
<comment type="similarity">
    <text evidence="1">Belongs to the ThiC family.</text>
</comment>
<protein>
    <recommendedName>
        <fullName evidence="1">Phosphomethylpyrimidine synthase</fullName>
        <ecNumber evidence="1">4.1.99.17</ecNumber>
    </recommendedName>
    <alternativeName>
        <fullName evidence="1">Hydroxymethylpyrimidine phosphate synthase</fullName>
        <shortName evidence="1">HMP-P synthase</shortName>
        <shortName evidence="1">HMP-phosphate synthase</shortName>
        <shortName evidence="1">HMPP synthase</shortName>
    </alternativeName>
    <alternativeName>
        <fullName evidence="1">Thiamine biosynthesis protein ThiC</fullName>
    </alternativeName>
</protein>
<reference key="1">
    <citation type="journal article" date="2005" name="Genome Res.">
        <title>Comparative and functional genomic analyses of the pathogenicity of phytopathogen Xanthomonas campestris pv. campestris.</title>
        <authorList>
            <person name="Qian W."/>
            <person name="Jia Y."/>
            <person name="Ren S.-X."/>
            <person name="He Y.-Q."/>
            <person name="Feng J.-X."/>
            <person name="Lu L.-F."/>
            <person name="Sun Q."/>
            <person name="Ying G."/>
            <person name="Tang D.-J."/>
            <person name="Tang H."/>
            <person name="Wu W."/>
            <person name="Hao P."/>
            <person name="Wang L."/>
            <person name="Jiang B.-L."/>
            <person name="Zeng S."/>
            <person name="Gu W.-Y."/>
            <person name="Lu G."/>
            <person name="Rong L."/>
            <person name="Tian Y."/>
            <person name="Yao Z."/>
            <person name="Fu G."/>
            <person name="Chen B."/>
            <person name="Fang R."/>
            <person name="Qiang B."/>
            <person name="Chen Z."/>
            <person name="Zhao G.-P."/>
            <person name="Tang J.-L."/>
            <person name="He C."/>
        </authorList>
    </citation>
    <scope>NUCLEOTIDE SEQUENCE [LARGE SCALE GENOMIC DNA]</scope>
    <source>
        <strain>8004</strain>
    </source>
</reference>
<dbReference type="EC" id="4.1.99.17" evidence="1"/>
<dbReference type="EMBL" id="CP000050">
    <property type="protein sequence ID" value="AAY47921.1"/>
    <property type="molecule type" value="Genomic_DNA"/>
</dbReference>
<dbReference type="RefSeq" id="WP_011038418.1">
    <property type="nucleotide sequence ID" value="NZ_CP155948.1"/>
</dbReference>
<dbReference type="SMR" id="Q4UYF2"/>
<dbReference type="KEGG" id="xcb:XC_0846"/>
<dbReference type="HOGENOM" id="CLU_013181_2_1_6"/>
<dbReference type="UniPathway" id="UPA00060"/>
<dbReference type="Proteomes" id="UP000000420">
    <property type="component" value="Chromosome"/>
</dbReference>
<dbReference type="GO" id="GO:0005829">
    <property type="term" value="C:cytosol"/>
    <property type="evidence" value="ECO:0007669"/>
    <property type="project" value="TreeGrafter"/>
</dbReference>
<dbReference type="GO" id="GO:0051539">
    <property type="term" value="F:4 iron, 4 sulfur cluster binding"/>
    <property type="evidence" value="ECO:0007669"/>
    <property type="project" value="UniProtKB-KW"/>
</dbReference>
<dbReference type="GO" id="GO:0016830">
    <property type="term" value="F:carbon-carbon lyase activity"/>
    <property type="evidence" value="ECO:0007669"/>
    <property type="project" value="InterPro"/>
</dbReference>
<dbReference type="GO" id="GO:0008270">
    <property type="term" value="F:zinc ion binding"/>
    <property type="evidence" value="ECO:0007669"/>
    <property type="project" value="UniProtKB-UniRule"/>
</dbReference>
<dbReference type="GO" id="GO:0009228">
    <property type="term" value="P:thiamine biosynthetic process"/>
    <property type="evidence" value="ECO:0007669"/>
    <property type="project" value="UniProtKB-KW"/>
</dbReference>
<dbReference type="GO" id="GO:0009229">
    <property type="term" value="P:thiamine diphosphate biosynthetic process"/>
    <property type="evidence" value="ECO:0007669"/>
    <property type="project" value="UniProtKB-UniRule"/>
</dbReference>
<dbReference type="FunFam" id="3.20.20.540:FF:000001">
    <property type="entry name" value="Phosphomethylpyrimidine synthase"/>
    <property type="match status" value="1"/>
</dbReference>
<dbReference type="Gene3D" id="6.10.250.620">
    <property type="match status" value="1"/>
</dbReference>
<dbReference type="Gene3D" id="3.20.20.540">
    <property type="entry name" value="Radical SAM ThiC family, central domain"/>
    <property type="match status" value="1"/>
</dbReference>
<dbReference type="HAMAP" id="MF_00089">
    <property type="entry name" value="ThiC"/>
    <property type="match status" value="1"/>
</dbReference>
<dbReference type="InterPro" id="IPR037509">
    <property type="entry name" value="ThiC"/>
</dbReference>
<dbReference type="InterPro" id="IPR025747">
    <property type="entry name" value="ThiC-associated_dom"/>
</dbReference>
<dbReference type="InterPro" id="IPR038521">
    <property type="entry name" value="ThiC/Bza_core_dom"/>
</dbReference>
<dbReference type="InterPro" id="IPR002817">
    <property type="entry name" value="ThiC/BzaA/B"/>
</dbReference>
<dbReference type="NCBIfam" id="NF006763">
    <property type="entry name" value="PRK09284.1"/>
    <property type="match status" value="1"/>
</dbReference>
<dbReference type="NCBIfam" id="NF009895">
    <property type="entry name" value="PRK13352.1"/>
    <property type="match status" value="1"/>
</dbReference>
<dbReference type="NCBIfam" id="TIGR00190">
    <property type="entry name" value="thiC"/>
    <property type="match status" value="1"/>
</dbReference>
<dbReference type="PANTHER" id="PTHR30557:SF1">
    <property type="entry name" value="PHOSPHOMETHYLPYRIMIDINE SYNTHASE, CHLOROPLASTIC"/>
    <property type="match status" value="1"/>
</dbReference>
<dbReference type="PANTHER" id="PTHR30557">
    <property type="entry name" value="THIAMINE BIOSYNTHESIS PROTEIN THIC"/>
    <property type="match status" value="1"/>
</dbReference>
<dbReference type="Pfam" id="PF13667">
    <property type="entry name" value="ThiC-associated"/>
    <property type="match status" value="1"/>
</dbReference>
<dbReference type="Pfam" id="PF01964">
    <property type="entry name" value="ThiC_Rad_SAM"/>
    <property type="match status" value="1"/>
</dbReference>
<dbReference type="SFLD" id="SFLDF00407">
    <property type="entry name" value="phosphomethylpyrimidine_syntha"/>
    <property type="match status" value="1"/>
</dbReference>
<dbReference type="SFLD" id="SFLDG01114">
    <property type="entry name" value="phosphomethylpyrimidine_syntha"/>
    <property type="match status" value="1"/>
</dbReference>
<dbReference type="SFLD" id="SFLDS00113">
    <property type="entry name" value="Radical_SAM_Phosphomethylpyrim"/>
    <property type="match status" value="1"/>
</dbReference>